<reference key="1">
    <citation type="journal article" date="2005" name="Science">
        <title>The transcriptional landscape of the mammalian genome.</title>
        <authorList>
            <person name="Carninci P."/>
            <person name="Kasukawa T."/>
            <person name="Katayama S."/>
            <person name="Gough J."/>
            <person name="Frith M.C."/>
            <person name="Maeda N."/>
            <person name="Oyama R."/>
            <person name="Ravasi T."/>
            <person name="Lenhard B."/>
            <person name="Wells C."/>
            <person name="Kodzius R."/>
            <person name="Shimokawa K."/>
            <person name="Bajic V.B."/>
            <person name="Brenner S.E."/>
            <person name="Batalov S."/>
            <person name="Forrest A.R."/>
            <person name="Zavolan M."/>
            <person name="Davis M.J."/>
            <person name="Wilming L.G."/>
            <person name="Aidinis V."/>
            <person name="Allen J.E."/>
            <person name="Ambesi-Impiombato A."/>
            <person name="Apweiler R."/>
            <person name="Aturaliya R.N."/>
            <person name="Bailey T.L."/>
            <person name="Bansal M."/>
            <person name="Baxter L."/>
            <person name="Beisel K.W."/>
            <person name="Bersano T."/>
            <person name="Bono H."/>
            <person name="Chalk A.M."/>
            <person name="Chiu K.P."/>
            <person name="Choudhary V."/>
            <person name="Christoffels A."/>
            <person name="Clutterbuck D.R."/>
            <person name="Crowe M.L."/>
            <person name="Dalla E."/>
            <person name="Dalrymple B.P."/>
            <person name="de Bono B."/>
            <person name="Della Gatta G."/>
            <person name="di Bernardo D."/>
            <person name="Down T."/>
            <person name="Engstrom P."/>
            <person name="Fagiolini M."/>
            <person name="Faulkner G."/>
            <person name="Fletcher C.F."/>
            <person name="Fukushima T."/>
            <person name="Furuno M."/>
            <person name="Futaki S."/>
            <person name="Gariboldi M."/>
            <person name="Georgii-Hemming P."/>
            <person name="Gingeras T.R."/>
            <person name="Gojobori T."/>
            <person name="Green R.E."/>
            <person name="Gustincich S."/>
            <person name="Harbers M."/>
            <person name="Hayashi Y."/>
            <person name="Hensch T.K."/>
            <person name="Hirokawa N."/>
            <person name="Hill D."/>
            <person name="Huminiecki L."/>
            <person name="Iacono M."/>
            <person name="Ikeo K."/>
            <person name="Iwama A."/>
            <person name="Ishikawa T."/>
            <person name="Jakt M."/>
            <person name="Kanapin A."/>
            <person name="Katoh M."/>
            <person name="Kawasawa Y."/>
            <person name="Kelso J."/>
            <person name="Kitamura H."/>
            <person name="Kitano H."/>
            <person name="Kollias G."/>
            <person name="Krishnan S.P."/>
            <person name="Kruger A."/>
            <person name="Kummerfeld S.K."/>
            <person name="Kurochkin I.V."/>
            <person name="Lareau L.F."/>
            <person name="Lazarevic D."/>
            <person name="Lipovich L."/>
            <person name="Liu J."/>
            <person name="Liuni S."/>
            <person name="McWilliam S."/>
            <person name="Madan Babu M."/>
            <person name="Madera M."/>
            <person name="Marchionni L."/>
            <person name="Matsuda H."/>
            <person name="Matsuzawa S."/>
            <person name="Miki H."/>
            <person name="Mignone F."/>
            <person name="Miyake S."/>
            <person name="Morris K."/>
            <person name="Mottagui-Tabar S."/>
            <person name="Mulder N."/>
            <person name="Nakano N."/>
            <person name="Nakauchi H."/>
            <person name="Ng P."/>
            <person name="Nilsson R."/>
            <person name="Nishiguchi S."/>
            <person name="Nishikawa S."/>
            <person name="Nori F."/>
            <person name="Ohara O."/>
            <person name="Okazaki Y."/>
            <person name="Orlando V."/>
            <person name="Pang K.C."/>
            <person name="Pavan W.J."/>
            <person name="Pavesi G."/>
            <person name="Pesole G."/>
            <person name="Petrovsky N."/>
            <person name="Piazza S."/>
            <person name="Reed J."/>
            <person name="Reid J.F."/>
            <person name="Ring B.Z."/>
            <person name="Ringwald M."/>
            <person name="Rost B."/>
            <person name="Ruan Y."/>
            <person name="Salzberg S.L."/>
            <person name="Sandelin A."/>
            <person name="Schneider C."/>
            <person name="Schoenbach C."/>
            <person name="Sekiguchi K."/>
            <person name="Semple C.A."/>
            <person name="Seno S."/>
            <person name="Sessa L."/>
            <person name="Sheng Y."/>
            <person name="Shibata Y."/>
            <person name="Shimada H."/>
            <person name="Shimada K."/>
            <person name="Silva D."/>
            <person name="Sinclair B."/>
            <person name="Sperling S."/>
            <person name="Stupka E."/>
            <person name="Sugiura K."/>
            <person name="Sultana R."/>
            <person name="Takenaka Y."/>
            <person name="Taki K."/>
            <person name="Tammoja K."/>
            <person name="Tan S.L."/>
            <person name="Tang S."/>
            <person name="Taylor M.S."/>
            <person name="Tegner J."/>
            <person name="Teichmann S.A."/>
            <person name="Ueda H.R."/>
            <person name="van Nimwegen E."/>
            <person name="Verardo R."/>
            <person name="Wei C.L."/>
            <person name="Yagi K."/>
            <person name="Yamanishi H."/>
            <person name="Zabarovsky E."/>
            <person name="Zhu S."/>
            <person name="Zimmer A."/>
            <person name="Hide W."/>
            <person name="Bult C."/>
            <person name="Grimmond S.M."/>
            <person name="Teasdale R.D."/>
            <person name="Liu E.T."/>
            <person name="Brusic V."/>
            <person name="Quackenbush J."/>
            <person name="Wahlestedt C."/>
            <person name="Mattick J.S."/>
            <person name="Hume D.A."/>
            <person name="Kai C."/>
            <person name="Sasaki D."/>
            <person name="Tomaru Y."/>
            <person name="Fukuda S."/>
            <person name="Kanamori-Katayama M."/>
            <person name="Suzuki M."/>
            <person name="Aoki J."/>
            <person name="Arakawa T."/>
            <person name="Iida J."/>
            <person name="Imamura K."/>
            <person name="Itoh M."/>
            <person name="Kato T."/>
            <person name="Kawaji H."/>
            <person name="Kawagashira N."/>
            <person name="Kawashima T."/>
            <person name="Kojima M."/>
            <person name="Kondo S."/>
            <person name="Konno H."/>
            <person name="Nakano K."/>
            <person name="Ninomiya N."/>
            <person name="Nishio T."/>
            <person name="Okada M."/>
            <person name="Plessy C."/>
            <person name="Shibata K."/>
            <person name="Shiraki T."/>
            <person name="Suzuki S."/>
            <person name="Tagami M."/>
            <person name="Waki K."/>
            <person name="Watahiki A."/>
            <person name="Okamura-Oho Y."/>
            <person name="Suzuki H."/>
            <person name="Kawai J."/>
            <person name="Hayashizaki Y."/>
        </authorList>
    </citation>
    <scope>NUCLEOTIDE SEQUENCE [LARGE SCALE MRNA]</scope>
    <source>
        <strain>C57BL/6J</strain>
        <tissue>Bone marrow</tissue>
        <tissue>Cerebellum</tissue>
    </source>
</reference>
<reference key="2">
    <citation type="journal article" date="2004" name="Genome Res.">
        <title>The status, quality, and expansion of the NIH full-length cDNA project: the Mammalian Gene Collection (MGC).</title>
        <authorList>
            <consortium name="The MGC Project Team"/>
        </authorList>
    </citation>
    <scope>NUCLEOTIDE SEQUENCE [LARGE SCALE MRNA]</scope>
    <source>
        <strain>FVB/N</strain>
        <tissue>Liver</tissue>
    </source>
</reference>
<reference key="3">
    <citation type="submission" date="2009-01" db="UniProtKB">
        <authorList>
            <person name="Lubec G."/>
            <person name="Sunyer B."/>
            <person name="Chen W.-Q."/>
        </authorList>
    </citation>
    <scope>PROTEIN SEQUENCE OF 1-12</scope>
    <scope>IDENTIFICATION BY MASS SPECTROMETRY</scope>
    <source>
        <strain>OF1</strain>
        <tissue>Hippocampus</tissue>
    </source>
</reference>
<reference key="4">
    <citation type="journal article" date="2002" name="Blood Cells Mol. Dis.">
        <title>Characterization of a novel hematopoietic marker expressed from early embryonic hematopoietic stem cells to adult mature lineages.</title>
        <authorList>
            <person name="Prost S."/>
            <person name="LeDiscorde M."/>
            <person name="Haddad R."/>
            <person name="Gluckman J.-C."/>
            <person name="Canque B."/>
            <person name="Kirszenbaum M."/>
        </authorList>
    </citation>
    <scope>NUCLEOTIDE SEQUENCE [MRNA] OF 25-193</scope>
    <scope>TISSUE SPECIFICITY</scope>
</reference>
<dbReference type="EMBL" id="AK149957">
    <property type="protein sequence ID" value="BAE29193.1"/>
    <property type="molecule type" value="mRNA"/>
</dbReference>
<dbReference type="EMBL" id="AK042644">
    <property type="protein sequence ID" value="BAC31317.1"/>
    <property type="status" value="ALT_INIT"/>
    <property type="molecule type" value="mRNA"/>
</dbReference>
<dbReference type="EMBL" id="BC019384">
    <property type="protein sequence ID" value="AAH19384.1"/>
    <property type="molecule type" value="mRNA"/>
</dbReference>
<dbReference type="EMBL" id="AF197931">
    <property type="protein sequence ID" value="AAM21162.1"/>
    <property type="molecule type" value="mRNA"/>
</dbReference>
<dbReference type="CCDS" id="CCDS28823.1"/>
<dbReference type="RefSeq" id="NP_663328.2">
    <property type="nucleotide sequence ID" value="NM_145353.3"/>
</dbReference>
<dbReference type="BioGRID" id="205747">
    <property type="interactions" value="5"/>
</dbReference>
<dbReference type="FunCoup" id="Q3UDR8">
    <property type="interactions" value="2272"/>
</dbReference>
<dbReference type="STRING" id="10090.ENSMUSP00000092897"/>
<dbReference type="GlyCosmos" id="Q3UDR8">
    <property type="glycosylation" value="1 site, No reported glycans"/>
</dbReference>
<dbReference type="GlyGen" id="Q3UDR8">
    <property type="glycosylation" value="2 sites, 1 N-linked glycan (1 site)"/>
</dbReference>
<dbReference type="iPTMnet" id="Q3UDR8"/>
<dbReference type="PhosphoSitePlus" id="Q3UDR8"/>
<dbReference type="SwissPalm" id="Q3UDR8"/>
<dbReference type="PaxDb" id="10090-ENSMUSP00000092897"/>
<dbReference type="PeptideAtlas" id="Q3UDR8"/>
<dbReference type="ProteomicsDB" id="299622"/>
<dbReference type="Pumba" id="Q3UDR8"/>
<dbReference type="Antibodypedia" id="3101">
    <property type="antibodies" value="107 antibodies from 22 providers"/>
</dbReference>
<dbReference type="DNASU" id="28064"/>
<dbReference type="Ensembl" id="ENSMUST00000095263.10">
    <property type="protein sequence ID" value="ENSMUSP00000092897.4"/>
    <property type="gene ID" value="ENSMUSG00000071074.10"/>
</dbReference>
<dbReference type="GeneID" id="28064"/>
<dbReference type="KEGG" id="mmu:28064"/>
<dbReference type="UCSC" id="uc008csd.2">
    <property type="organism name" value="mouse"/>
</dbReference>
<dbReference type="AGR" id="MGI:106280"/>
<dbReference type="CTD" id="25844"/>
<dbReference type="MGI" id="MGI:106280">
    <property type="gene designation" value="Yipf3"/>
</dbReference>
<dbReference type="VEuPathDB" id="HostDB:ENSMUSG00000071074"/>
<dbReference type="eggNOG" id="KOG3114">
    <property type="taxonomic scope" value="Eukaryota"/>
</dbReference>
<dbReference type="GeneTree" id="ENSGT00940000153766"/>
<dbReference type="HOGENOM" id="CLU_068070_0_0_1"/>
<dbReference type="InParanoid" id="Q3UDR8"/>
<dbReference type="OMA" id="HCIVLFV"/>
<dbReference type="OrthoDB" id="10256463at2759"/>
<dbReference type="PhylomeDB" id="Q3UDR8"/>
<dbReference type="TreeFam" id="TF314073"/>
<dbReference type="BioGRID-ORCS" id="28064">
    <property type="hits" value="3 hits in 81 CRISPR screens"/>
</dbReference>
<dbReference type="ChiTaRS" id="Yipf3">
    <property type="organism name" value="mouse"/>
</dbReference>
<dbReference type="PRO" id="PR:Q3UDR8"/>
<dbReference type="Proteomes" id="UP000000589">
    <property type="component" value="Chromosome 17"/>
</dbReference>
<dbReference type="RNAct" id="Q3UDR8">
    <property type="molecule type" value="protein"/>
</dbReference>
<dbReference type="Bgee" id="ENSMUSG00000071074">
    <property type="expression patterns" value="Expressed in right kidney and 246 other cell types or tissues"/>
</dbReference>
<dbReference type="ExpressionAtlas" id="Q3UDR8">
    <property type="expression patterns" value="baseline and differential"/>
</dbReference>
<dbReference type="GO" id="GO:0005794">
    <property type="term" value="C:Golgi apparatus"/>
    <property type="evidence" value="ECO:0007669"/>
    <property type="project" value="UniProtKB-SubCell"/>
</dbReference>
<dbReference type="GO" id="GO:0005886">
    <property type="term" value="C:plasma membrane"/>
    <property type="evidence" value="ECO:0007669"/>
    <property type="project" value="UniProtKB-SubCell"/>
</dbReference>
<dbReference type="GO" id="GO:0030133">
    <property type="term" value="C:transport vesicle"/>
    <property type="evidence" value="ECO:0007669"/>
    <property type="project" value="Ensembl"/>
</dbReference>
<dbReference type="GO" id="GO:0030154">
    <property type="term" value="P:cell differentiation"/>
    <property type="evidence" value="ECO:0007669"/>
    <property type="project" value="UniProtKB-KW"/>
</dbReference>
<dbReference type="InterPro" id="IPR051521">
    <property type="entry name" value="tRNA_Mod/Golgi_Maint"/>
</dbReference>
<dbReference type="PANTHER" id="PTHR15627">
    <property type="entry name" value="NATURAL KILLER CELL-SPECIFIC ANTIGEN KLIP1"/>
    <property type="match status" value="1"/>
</dbReference>
<dbReference type="PANTHER" id="PTHR15627:SF14">
    <property type="entry name" value="PROTEIN YIPF3"/>
    <property type="match status" value="1"/>
</dbReference>
<comment type="function">
    <text evidence="1">Involved in the maintenance of the Golgi structure. May play a role in hematopoiesis (By similarity).</text>
</comment>
<comment type="subunit">
    <text evidence="2">Interacts with YIPF4 and YIPF5.</text>
</comment>
<comment type="subcellular location">
    <subcellularLocation>
        <location evidence="1">Cell membrane</location>
        <topology>Multi-pass membrane protein</topology>
    </subcellularLocation>
    <subcellularLocation>
        <location evidence="1">Golgi apparatus</location>
        <location evidence="1">cis-Golgi network membrane</location>
        <topology>Multi-pass membrane protein</topology>
    </subcellularLocation>
    <subcellularLocation>
        <location evidence="1">Cytoplasm</location>
    </subcellularLocation>
</comment>
<comment type="tissue specificity">
    <text evidence="5">Expressed by splenocytes (at protein level).</text>
</comment>
<comment type="similarity">
    <text evidence="6">Belongs to the YIP1 family.</text>
</comment>
<comment type="sequence caution" evidence="6">
    <conflict type="erroneous initiation">
        <sequence resource="EMBL-CDS" id="BAC31317"/>
    </conflict>
    <text>Truncated N-terminus.</text>
</comment>
<protein>
    <recommendedName>
        <fullName>Protein YIPF3</fullName>
    </recommendedName>
    <alternativeName>
        <fullName>Killer lineage protein 1</fullName>
    </alternativeName>
    <alternativeName>
        <fullName>YIP1 family member 3</fullName>
    </alternativeName>
    <component>
        <recommendedName>
            <fullName>Protein YIPF3, N-terminally processed</fullName>
        </recommendedName>
    </component>
</protein>
<gene>
    <name type="primary">Yipf3</name>
    <name type="synonym">D17Wsu94e</name>
    <name type="synonym">Klip1</name>
</gene>
<name>YIPF3_MOUSE</name>
<accession>Q3UDR8</accession>
<accession>Q8C998</accession>
<accession>Q8K5D1</accession>
<accession>Q8VCS2</accession>
<sequence>MATPAAPASGVRNGAGPEWGGFEENIQGGGSAVIDMENMDDTSGSSFEDMGELHQRLREEEVDADAAAAEEEDGEFLGMKGFKGQLSRQVADQMWQAGKRQASRAFSLYANIDILRPYFDVEPAQVRSRLLESMIPIKMVNFPQKVAGELYGPLMLVFTLVAILLHGMKTSDTIIREGTLMGTAIGTCFGYWLGVSSFIYFLAYLCNAQITMLQMLALLGYGLFGHCIVLFITYNIHLHALFYLFWLLVGGLSTLRMVAVLVSRTVGPTQRLLLCGTLAALHMLFLLYLHFAYHKVVEGILDTLEGPNIPPMQRVPRDIPAVLPAARLPVAVINATAKAIAVTLQSH</sequence>
<evidence type="ECO:0000250" key="1"/>
<evidence type="ECO:0000250" key="2">
    <source>
        <dbReference type="UniProtKB" id="Q9GZM5"/>
    </source>
</evidence>
<evidence type="ECO:0000255" key="3"/>
<evidence type="ECO:0000256" key="4">
    <source>
        <dbReference type="SAM" id="MobiDB-lite"/>
    </source>
</evidence>
<evidence type="ECO:0000269" key="5">
    <source>
    </source>
</evidence>
<evidence type="ECO:0000305" key="6"/>
<keyword id="KW-0007">Acetylation</keyword>
<keyword id="KW-1003">Cell membrane</keyword>
<keyword id="KW-0963">Cytoplasm</keyword>
<keyword id="KW-0221">Differentiation</keyword>
<keyword id="KW-0903">Direct protein sequencing</keyword>
<keyword id="KW-0325">Glycoprotein</keyword>
<keyword id="KW-0333">Golgi apparatus</keyword>
<keyword id="KW-0472">Membrane</keyword>
<keyword id="KW-1185">Reference proteome</keyword>
<keyword id="KW-0812">Transmembrane</keyword>
<keyword id="KW-1133">Transmembrane helix</keyword>
<organism>
    <name type="scientific">Mus musculus</name>
    <name type="common">Mouse</name>
    <dbReference type="NCBI Taxonomy" id="10090"/>
    <lineage>
        <taxon>Eukaryota</taxon>
        <taxon>Metazoa</taxon>
        <taxon>Chordata</taxon>
        <taxon>Craniata</taxon>
        <taxon>Vertebrata</taxon>
        <taxon>Euteleostomi</taxon>
        <taxon>Mammalia</taxon>
        <taxon>Eutheria</taxon>
        <taxon>Euarchontoglires</taxon>
        <taxon>Glires</taxon>
        <taxon>Rodentia</taxon>
        <taxon>Myomorpha</taxon>
        <taxon>Muroidea</taxon>
        <taxon>Muridae</taxon>
        <taxon>Murinae</taxon>
        <taxon>Mus</taxon>
        <taxon>Mus</taxon>
    </lineage>
</organism>
<proteinExistence type="evidence at protein level"/>
<feature type="chain" id="PRO_0000244447" description="Protein YIPF3">
    <location>
        <begin position="1"/>
        <end position="347"/>
    </location>
</feature>
<feature type="initiator methionine" description="Removed; alternate" evidence="2">
    <location>
        <position position="1"/>
    </location>
</feature>
<feature type="chain" id="PRO_0000424523" description="Protein YIPF3, N-terminally processed">
    <location>
        <begin position="2"/>
        <end position="347"/>
    </location>
</feature>
<feature type="topological domain" description="Cytoplasmic" evidence="2">
    <location>
        <begin position="2"/>
        <end position="145"/>
    </location>
</feature>
<feature type="transmembrane region" description="Helical" evidence="3">
    <location>
        <begin position="146"/>
        <end position="166"/>
    </location>
</feature>
<feature type="topological domain" description="Lumenal" evidence="6">
    <location>
        <begin position="167"/>
        <end position="184"/>
    </location>
</feature>
<feature type="transmembrane region" description="Helical" evidence="3">
    <location>
        <begin position="185"/>
        <end position="205"/>
    </location>
</feature>
<feature type="topological domain" description="Cytoplasmic" evidence="6">
    <location>
        <begin position="206"/>
        <end position="211"/>
    </location>
</feature>
<feature type="transmembrane region" description="Helical" evidence="3">
    <location>
        <begin position="212"/>
        <end position="234"/>
    </location>
</feature>
<feature type="topological domain" description="Lumenal" evidence="6">
    <location>
        <begin position="235"/>
        <end position="237"/>
    </location>
</feature>
<feature type="transmembrane region" description="Helical" evidence="3">
    <location>
        <begin position="238"/>
        <end position="260"/>
    </location>
</feature>
<feature type="topological domain" description="Cytoplasmic" evidence="6">
    <location>
        <begin position="261"/>
        <end position="271"/>
    </location>
</feature>
<feature type="transmembrane region" description="Helical" evidence="3">
    <location>
        <begin position="272"/>
        <end position="292"/>
    </location>
</feature>
<feature type="topological domain" description="Lumenal" evidence="2">
    <location>
        <begin position="293"/>
        <end position="347"/>
    </location>
</feature>
<feature type="region of interest" description="Disordered" evidence="4">
    <location>
        <begin position="1"/>
        <end position="31"/>
    </location>
</feature>
<feature type="modified residue" description="N-acetylalanine; in Protein YIPF3, N-terminally processed" evidence="2">
    <location>
        <position position="2"/>
    </location>
</feature>
<feature type="glycosylation site" description="N-linked (GlcNAc...) asparagine" evidence="3">
    <location>
        <position position="334"/>
    </location>
</feature>
<feature type="sequence conflict" description="In Ref. 2; AAH19384." evidence="6" ref="2">
    <original>I</original>
    <variation>V</variation>
    <location>
        <position position="333"/>
    </location>
</feature>